<protein>
    <recommendedName>
        <fullName>Protein MGF 100-1R</fullName>
    </recommendedName>
</protein>
<dbReference type="EMBL" id="AY261360">
    <property type="status" value="NOT_ANNOTATED_CDS"/>
    <property type="molecule type" value="Genomic_DNA"/>
</dbReference>
<dbReference type="SMR" id="P0C9F0"/>
<dbReference type="Proteomes" id="UP000000861">
    <property type="component" value="Segment"/>
</dbReference>
<organismHost>
    <name type="scientific">Ornithodoros</name>
    <name type="common">relapsing fever ticks</name>
    <dbReference type="NCBI Taxonomy" id="6937"/>
</organismHost>
<organismHost>
    <name type="scientific">Phacochoerus aethiopicus</name>
    <name type="common">Warthog</name>
    <dbReference type="NCBI Taxonomy" id="85517"/>
</organismHost>
<organismHost>
    <name type="scientific">Phacochoerus africanus</name>
    <name type="common">Warthog</name>
    <dbReference type="NCBI Taxonomy" id="41426"/>
</organismHost>
<organismHost>
    <name type="scientific">Potamochoerus larvatus</name>
    <name type="common">Bushpig</name>
    <dbReference type="NCBI Taxonomy" id="273792"/>
</organismHost>
<organismHost>
    <name type="scientific">Sus scrofa</name>
    <name type="common">Pig</name>
    <dbReference type="NCBI Taxonomy" id="9823"/>
</organismHost>
<evidence type="ECO:0000250" key="1"/>
<evidence type="ECO:0000305" key="2"/>
<name>1001R_ASFK5</name>
<reference key="1">
    <citation type="submission" date="2003-03" db="EMBL/GenBank/DDBJ databases">
        <title>African swine fever virus genomes.</title>
        <authorList>
            <person name="Kutish G.F."/>
            <person name="Rock D.L."/>
        </authorList>
    </citation>
    <scope>NUCLEOTIDE SEQUENCE [LARGE SCALE GENOMIC DNA]</scope>
</reference>
<feature type="chain" id="PRO_0000373170" description="Protein MGF 100-1R">
    <location>
        <begin position="1"/>
        <end position="122"/>
    </location>
</feature>
<proteinExistence type="inferred from homology"/>
<organism>
    <name type="scientific">African swine fever virus (isolate Pig/Kenya/KEN-50/1950)</name>
    <name type="common">ASFV</name>
    <dbReference type="NCBI Taxonomy" id="561445"/>
    <lineage>
        <taxon>Viruses</taxon>
        <taxon>Varidnaviria</taxon>
        <taxon>Bamfordvirae</taxon>
        <taxon>Nucleocytoviricota</taxon>
        <taxon>Pokkesviricetes</taxon>
        <taxon>Asfuvirales</taxon>
        <taxon>Asfarviridae</taxon>
        <taxon>Asfivirus</taxon>
        <taxon>African swine fever virus</taxon>
    </lineage>
</organism>
<gene>
    <name type="ordered locus">Ken-018</name>
</gene>
<sequence>MVRLFYNPIKYLFYRRSCKKRLRKALKKLNFYHPPKECCQIYRLLENAPGGTYFITENMTNELIMIAKDPVDKKIKSVKLYLTGNYIKINQHYYINIYMYLMRYNQIYKYPLICFSKYSKIL</sequence>
<accession>P0C9F0</accession>
<comment type="function">
    <text evidence="1">Plays a role in virus cell tropism, and may be required for efficient virus replication in macrophages.</text>
</comment>
<comment type="similarity">
    <text evidence="2">Belongs to the asfivirus MGF 100 family.</text>
</comment>